<comment type="function">
    <text evidence="3 5">Involved in the control of the PYK10 complex size and possibly substrate specificity. May be exported from the endoplasmic reticulum upon interaction with MVP1.</text>
</comment>
<comment type="subunit">
    <text evidence="3 4">Part of the PYK10 complex. Interacts with MVP1.</text>
</comment>
<comment type="subcellular location">
    <subcellularLocation>
        <location evidence="5">Endoplasmic reticulum</location>
    </subcellularLocation>
    <text>Only transiently resident in a specific ER subcompartment and is either post-translationally modified prior to export or targeted for degradation.</text>
</comment>
<comment type="tissue specificity">
    <text evidence="3">Expressed mainly in roots.</text>
</comment>
<comment type="developmental stage">
    <text evidence="5">Expressed in 10-day-old seedlings.</text>
</comment>
<comment type="similarity">
    <text evidence="6">Belongs to the 'GDSL' lipolytic enzyme family.</text>
</comment>
<comment type="caution">
    <text evidence="6">Lacks the conserved active site 'GDSL' motif. Its enzyme activity is therefore unsure.</text>
</comment>
<comment type="sequence caution" evidence="6">
    <conflict type="erroneous gene model prediction">
        <sequence resource="EMBL-CDS" id="AAD25773"/>
    </conflict>
</comment>
<comment type="sequence caution" evidence="6">
    <conflict type="erroneous initiation">
        <sequence resource="EMBL-CDS" id="AAM67268"/>
    </conflict>
    <text>Truncated N-terminus.</text>
</comment>
<protein>
    <recommendedName>
        <fullName>Inactive GDSL esterase/lipase-like protein 23</fullName>
    </recommendedName>
    <alternativeName>
        <fullName>GDSL-like lipase 23</fullName>
    </alternativeName>
    <alternativeName>
        <fullName>Probable myrosinase-associated protein GLL23</fullName>
    </alternativeName>
</protein>
<accession>Q8W4H8</accession>
<accession>Q8LGI1</accession>
<accession>Q9SYF7</accession>
<name>GDL19_ARATH</name>
<dbReference type="EMBL" id="AC006577">
    <property type="protein sequence ID" value="AAD25773.1"/>
    <property type="status" value="ALT_SEQ"/>
    <property type="molecule type" value="Genomic_DNA"/>
</dbReference>
<dbReference type="EMBL" id="CP002684">
    <property type="protein sequence ID" value="AEE33034.1"/>
    <property type="molecule type" value="Genomic_DNA"/>
</dbReference>
<dbReference type="EMBL" id="AY062552">
    <property type="protein sequence ID" value="AAL32630.1"/>
    <property type="molecule type" value="mRNA"/>
</dbReference>
<dbReference type="EMBL" id="AY093330">
    <property type="protein sequence ID" value="AAM13329.1"/>
    <property type="molecule type" value="mRNA"/>
</dbReference>
<dbReference type="EMBL" id="AY084258">
    <property type="protein sequence ID" value="AAM67268.1"/>
    <property type="status" value="ALT_INIT"/>
    <property type="molecule type" value="mRNA"/>
</dbReference>
<dbReference type="PIR" id="F96580">
    <property type="entry name" value="F96580"/>
</dbReference>
<dbReference type="RefSeq" id="NP_564647.1">
    <property type="nucleotide sequence ID" value="NM_104278.4"/>
</dbReference>
<dbReference type="SMR" id="Q8W4H8"/>
<dbReference type="BioGRID" id="27064">
    <property type="interactions" value="8"/>
</dbReference>
<dbReference type="FunCoup" id="Q8W4H8">
    <property type="interactions" value="19"/>
</dbReference>
<dbReference type="IntAct" id="Q8W4H8">
    <property type="interactions" value="2"/>
</dbReference>
<dbReference type="STRING" id="3702.Q8W4H8"/>
<dbReference type="GlyCosmos" id="Q8W4H8">
    <property type="glycosylation" value="3 sites, No reported glycans"/>
</dbReference>
<dbReference type="GlyGen" id="Q8W4H8">
    <property type="glycosylation" value="4 sites"/>
</dbReference>
<dbReference type="MetOSite" id="Q8W4H8"/>
<dbReference type="PaxDb" id="3702-AT1G54010.1"/>
<dbReference type="ProteomicsDB" id="221919"/>
<dbReference type="EnsemblPlants" id="AT1G54010.1">
    <property type="protein sequence ID" value="AT1G54010.1"/>
    <property type="gene ID" value="AT1G54010"/>
</dbReference>
<dbReference type="GeneID" id="841839"/>
<dbReference type="Gramene" id="AT1G54010.1">
    <property type="protein sequence ID" value="AT1G54010.1"/>
    <property type="gene ID" value="AT1G54010"/>
</dbReference>
<dbReference type="KEGG" id="ath:AT1G54010"/>
<dbReference type="Araport" id="AT1G54010"/>
<dbReference type="TAIR" id="AT1G54010">
    <property type="gene designation" value="GLL23"/>
</dbReference>
<dbReference type="eggNOG" id="ENOG502S4IX">
    <property type="taxonomic scope" value="Eukaryota"/>
</dbReference>
<dbReference type="HOGENOM" id="CLU_015101_7_0_1"/>
<dbReference type="InParanoid" id="Q8W4H8"/>
<dbReference type="OMA" id="NVHSRLC"/>
<dbReference type="PhylomeDB" id="Q8W4H8"/>
<dbReference type="BioCyc" id="ARA:AT1G54010-MONOMER"/>
<dbReference type="PRO" id="PR:Q8W4H8"/>
<dbReference type="Proteomes" id="UP000006548">
    <property type="component" value="Chromosome 1"/>
</dbReference>
<dbReference type="ExpressionAtlas" id="Q8W4H8">
    <property type="expression patterns" value="baseline and differential"/>
</dbReference>
<dbReference type="GO" id="GO:0005783">
    <property type="term" value="C:endoplasmic reticulum"/>
    <property type="evidence" value="ECO:0007669"/>
    <property type="project" value="UniProtKB-SubCell"/>
</dbReference>
<dbReference type="GO" id="GO:0005634">
    <property type="term" value="C:nucleus"/>
    <property type="evidence" value="ECO:0007005"/>
    <property type="project" value="TAIR"/>
</dbReference>
<dbReference type="GO" id="GO:0000325">
    <property type="term" value="C:plant-type vacuole"/>
    <property type="evidence" value="ECO:0007005"/>
    <property type="project" value="TAIR"/>
</dbReference>
<dbReference type="GO" id="GO:0009506">
    <property type="term" value="C:plasmodesma"/>
    <property type="evidence" value="ECO:0007005"/>
    <property type="project" value="TAIR"/>
</dbReference>
<dbReference type="GO" id="GO:0005773">
    <property type="term" value="C:vacuole"/>
    <property type="evidence" value="ECO:0007005"/>
    <property type="project" value="TAIR"/>
</dbReference>
<dbReference type="GO" id="GO:0016788">
    <property type="term" value="F:hydrolase activity, acting on ester bonds"/>
    <property type="evidence" value="ECO:0007669"/>
    <property type="project" value="InterPro"/>
</dbReference>
<dbReference type="CDD" id="cd01837">
    <property type="entry name" value="SGNH_plant_lipase_like"/>
    <property type="match status" value="1"/>
</dbReference>
<dbReference type="FunFam" id="3.40.50.1110:FF:000026">
    <property type="entry name" value="GDSL esterase/lipase At3g14220"/>
    <property type="match status" value="1"/>
</dbReference>
<dbReference type="Gene3D" id="3.40.50.1110">
    <property type="entry name" value="SGNH hydrolase"/>
    <property type="match status" value="1"/>
</dbReference>
<dbReference type="InterPro" id="IPR001087">
    <property type="entry name" value="GDSL"/>
</dbReference>
<dbReference type="InterPro" id="IPR044552">
    <property type="entry name" value="GLIP1-5/GLL25"/>
</dbReference>
<dbReference type="InterPro" id="IPR036514">
    <property type="entry name" value="SGNH_hydro_sf"/>
</dbReference>
<dbReference type="InterPro" id="IPR035669">
    <property type="entry name" value="SGNH_plant_lipase-like"/>
</dbReference>
<dbReference type="PANTHER" id="PTHR45966">
    <property type="entry name" value="GDSL-LIKE LIPASE/ACYLHYDROLASE"/>
    <property type="match status" value="1"/>
</dbReference>
<dbReference type="PANTHER" id="PTHR45966:SF36">
    <property type="entry name" value="INACTIVE GDSL ESTERASE_LIPASE-LIKE PROTEIN 25"/>
    <property type="match status" value="1"/>
</dbReference>
<dbReference type="Pfam" id="PF00657">
    <property type="entry name" value="Lipase_GDSL"/>
    <property type="match status" value="1"/>
</dbReference>
<dbReference type="SUPFAM" id="SSF52266">
    <property type="entry name" value="SGNH hydrolase"/>
    <property type="match status" value="1"/>
</dbReference>
<evidence type="ECO:0000250" key="1"/>
<evidence type="ECO:0000255" key="2"/>
<evidence type="ECO:0000269" key="3">
    <source>
    </source>
</evidence>
<evidence type="ECO:0000269" key="4">
    <source>
    </source>
</evidence>
<evidence type="ECO:0000269" key="5">
    <source>
    </source>
</evidence>
<evidence type="ECO:0000305" key="6"/>
<reference key="1">
    <citation type="journal article" date="2000" name="Nature">
        <title>Sequence and analysis of chromosome 1 of the plant Arabidopsis thaliana.</title>
        <authorList>
            <person name="Theologis A."/>
            <person name="Ecker J.R."/>
            <person name="Palm C.J."/>
            <person name="Federspiel N.A."/>
            <person name="Kaul S."/>
            <person name="White O."/>
            <person name="Alonso J."/>
            <person name="Altafi H."/>
            <person name="Araujo R."/>
            <person name="Bowman C.L."/>
            <person name="Brooks S.Y."/>
            <person name="Buehler E."/>
            <person name="Chan A."/>
            <person name="Chao Q."/>
            <person name="Chen H."/>
            <person name="Cheuk R.F."/>
            <person name="Chin C.W."/>
            <person name="Chung M.K."/>
            <person name="Conn L."/>
            <person name="Conway A.B."/>
            <person name="Conway A.R."/>
            <person name="Creasy T.H."/>
            <person name="Dewar K."/>
            <person name="Dunn P."/>
            <person name="Etgu P."/>
            <person name="Feldblyum T.V."/>
            <person name="Feng J.-D."/>
            <person name="Fong B."/>
            <person name="Fujii C.Y."/>
            <person name="Gill J.E."/>
            <person name="Goldsmith A.D."/>
            <person name="Haas B."/>
            <person name="Hansen N.F."/>
            <person name="Hughes B."/>
            <person name="Huizar L."/>
            <person name="Hunter J.L."/>
            <person name="Jenkins J."/>
            <person name="Johnson-Hopson C."/>
            <person name="Khan S."/>
            <person name="Khaykin E."/>
            <person name="Kim C.J."/>
            <person name="Koo H.L."/>
            <person name="Kremenetskaia I."/>
            <person name="Kurtz D.B."/>
            <person name="Kwan A."/>
            <person name="Lam B."/>
            <person name="Langin-Hooper S."/>
            <person name="Lee A."/>
            <person name="Lee J.M."/>
            <person name="Lenz C.A."/>
            <person name="Li J.H."/>
            <person name="Li Y.-P."/>
            <person name="Lin X."/>
            <person name="Liu S.X."/>
            <person name="Liu Z.A."/>
            <person name="Luros J.S."/>
            <person name="Maiti R."/>
            <person name="Marziali A."/>
            <person name="Militscher J."/>
            <person name="Miranda M."/>
            <person name="Nguyen M."/>
            <person name="Nierman W.C."/>
            <person name="Osborne B.I."/>
            <person name="Pai G."/>
            <person name="Peterson J."/>
            <person name="Pham P.K."/>
            <person name="Rizzo M."/>
            <person name="Rooney T."/>
            <person name="Rowley D."/>
            <person name="Sakano H."/>
            <person name="Salzberg S.L."/>
            <person name="Schwartz J.R."/>
            <person name="Shinn P."/>
            <person name="Southwick A.M."/>
            <person name="Sun H."/>
            <person name="Tallon L.J."/>
            <person name="Tambunga G."/>
            <person name="Toriumi M.J."/>
            <person name="Town C.D."/>
            <person name="Utterback T."/>
            <person name="Van Aken S."/>
            <person name="Vaysberg M."/>
            <person name="Vysotskaia V.S."/>
            <person name="Walker M."/>
            <person name="Wu D."/>
            <person name="Yu G."/>
            <person name="Fraser C.M."/>
            <person name="Venter J.C."/>
            <person name="Davis R.W."/>
        </authorList>
    </citation>
    <scope>NUCLEOTIDE SEQUENCE [LARGE SCALE GENOMIC DNA]</scope>
    <source>
        <strain>cv. Columbia</strain>
    </source>
</reference>
<reference key="2">
    <citation type="journal article" date="2017" name="Plant J.">
        <title>Araport11: a complete reannotation of the Arabidopsis thaliana reference genome.</title>
        <authorList>
            <person name="Cheng C.Y."/>
            <person name="Krishnakumar V."/>
            <person name="Chan A.P."/>
            <person name="Thibaud-Nissen F."/>
            <person name="Schobel S."/>
            <person name="Town C.D."/>
        </authorList>
    </citation>
    <scope>GENOME REANNOTATION</scope>
    <source>
        <strain>cv. Columbia</strain>
    </source>
</reference>
<reference key="3">
    <citation type="journal article" date="2003" name="Science">
        <title>Empirical analysis of transcriptional activity in the Arabidopsis genome.</title>
        <authorList>
            <person name="Yamada K."/>
            <person name="Lim J."/>
            <person name="Dale J.M."/>
            <person name="Chen H."/>
            <person name="Shinn P."/>
            <person name="Palm C.J."/>
            <person name="Southwick A.M."/>
            <person name="Wu H.C."/>
            <person name="Kim C.J."/>
            <person name="Nguyen M."/>
            <person name="Pham P.K."/>
            <person name="Cheuk R.F."/>
            <person name="Karlin-Newmann G."/>
            <person name="Liu S.X."/>
            <person name="Lam B."/>
            <person name="Sakano H."/>
            <person name="Wu T."/>
            <person name="Yu G."/>
            <person name="Miranda M."/>
            <person name="Quach H.L."/>
            <person name="Tripp M."/>
            <person name="Chang C.H."/>
            <person name="Lee J.M."/>
            <person name="Toriumi M.J."/>
            <person name="Chan M.M."/>
            <person name="Tang C.C."/>
            <person name="Onodera C.S."/>
            <person name="Deng J.M."/>
            <person name="Akiyama K."/>
            <person name="Ansari Y."/>
            <person name="Arakawa T."/>
            <person name="Banh J."/>
            <person name="Banno F."/>
            <person name="Bowser L."/>
            <person name="Brooks S.Y."/>
            <person name="Carninci P."/>
            <person name="Chao Q."/>
            <person name="Choy N."/>
            <person name="Enju A."/>
            <person name="Goldsmith A.D."/>
            <person name="Gurjal M."/>
            <person name="Hansen N.F."/>
            <person name="Hayashizaki Y."/>
            <person name="Johnson-Hopson C."/>
            <person name="Hsuan V.W."/>
            <person name="Iida K."/>
            <person name="Karnes M."/>
            <person name="Khan S."/>
            <person name="Koesema E."/>
            <person name="Ishida J."/>
            <person name="Jiang P.X."/>
            <person name="Jones T."/>
            <person name="Kawai J."/>
            <person name="Kamiya A."/>
            <person name="Meyers C."/>
            <person name="Nakajima M."/>
            <person name="Narusaka M."/>
            <person name="Seki M."/>
            <person name="Sakurai T."/>
            <person name="Satou M."/>
            <person name="Tamse R."/>
            <person name="Vaysberg M."/>
            <person name="Wallender E.K."/>
            <person name="Wong C."/>
            <person name="Yamamura Y."/>
            <person name="Yuan S."/>
            <person name="Shinozaki K."/>
            <person name="Davis R.W."/>
            <person name="Theologis A."/>
            <person name="Ecker J.R."/>
        </authorList>
    </citation>
    <scope>NUCLEOTIDE SEQUENCE [LARGE SCALE MRNA]</scope>
    <source>
        <strain>cv. Columbia</strain>
    </source>
</reference>
<reference key="4">
    <citation type="submission" date="2002-03" db="EMBL/GenBank/DDBJ databases">
        <title>Full-length cDNA from Arabidopsis thaliana.</title>
        <authorList>
            <person name="Brover V.V."/>
            <person name="Troukhan M.E."/>
            <person name="Alexandrov N.A."/>
            <person name="Lu Y.-P."/>
            <person name="Flavell R.B."/>
            <person name="Feldmann K.A."/>
        </authorList>
    </citation>
    <scope>NUCLEOTIDE SEQUENCE [LARGE SCALE MRNA]</scope>
</reference>
<reference key="5">
    <citation type="journal article" date="2004" name="Prog. Lipid Res.">
        <title>GDSL family of serine esterases/lipases.</title>
        <authorList>
            <person name="Akoh C.C."/>
            <person name="Lee G.-C."/>
            <person name="Liaw Y.-C."/>
            <person name="Huang T.-H."/>
            <person name="Shaw J.-F."/>
        </authorList>
    </citation>
    <scope>REVIEW</scope>
</reference>
<reference key="6">
    <citation type="journal article" date="2008" name="Pak. J. Biol. Sci.">
        <title>Sequence analysis of GDSL lipase gene family in Arabidopsis thaliana.</title>
        <authorList>
            <person name="Ling H."/>
        </authorList>
    </citation>
    <scope>GENE FAMILY</scope>
</reference>
<reference key="7">
    <citation type="journal article" date="2008" name="Plant Cell Physiol.">
        <title>Antagonistic jacalin-related lectins regulate the size of ER body-type beta-glucosidase complexes in Arabidopsis thaliana.</title>
        <authorList>
            <person name="Nagano A.J."/>
            <person name="Fukao Y."/>
            <person name="Fujiwara M."/>
            <person name="Nishimura M."/>
            <person name="Hara-Nishimura I."/>
        </authorList>
    </citation>
    <scope>FUNCTION</scope>
    <scope>GENE FAMILY</scope>
    <scope>NOMENCLATURE</scope>
    <scope>TISSUE SPECIFICITY</scope>
    <scope>IDENTIFICATION IN THE PYK10 COMPLEX</scope>
</reference>
<reference key="8">
    <citation type="journal article" date="2012" name="PLoS ONE">
        <title>ERMO3/MVP1/GOLD36 is involved in a cell type-specific mechanism for maintaining ER morphology in Arabidopsis thaliana.</title>
        <authorList>
            <person name="Nakano R.T."/>
            <person name="Matsushima R."/>
            <person name="Nagano A.J."/>
            <person name="Fukao Y."/>
            <person name="Fujiwara M."/>
            <person name="Kondo M."/>
            <person name="Nishimura M."/>
            <person name="Hara-Nishimura I."/>
        </authorList>
    </citation>
    <scope>INTERACTION WITH MVP1</scope>
</reference>
<reference key="9">
    <citation type="journal article" date="2014" name="Plant J.">
        <title>Trafficking of the myrosinase-associated protein GLL23 requires NUC/MVP1/GOLD36/ERMO3 and the p24 protein CYB.</title>
        <authorList>
            <person name="Jancowski S."/>
            <person name="Catching A."/>
            <person name="Pighin J."/>
            <person name="Kudo T."/>
            <person name="Foissner I."/>
            <person name="Wasteneys G.O."/>
        </authorList>
    </citation>
    <scope>FUNCTION</scope>
    <scope>DEVELOPMENTAL STAGE</scope>
    <scope>SUBCELLULAR LOCATION</scope>
</reference>
<keyword id="KW-0256">Endoplasmic reticulum</keyword>
<keyword id="KW-0325">Glycoprotein</keyword>
<keyword id="KW-1185">Reference proteome</keyword>
<keyword id="KW-0732">Signal</keyword>
<sequence length="386" mass="43143">MMAKNCNLVSVLCVFLVLTLFNKPITVAGQNIPAVGLFTFGDSNFDAGNKQTLTKTLLPQTFWPYGKSRDDPNGKFSDGLIAPDFLAKFMRIPIVIPPALQPNVNVSRGASFAVADATLLGAPVESLTLNQQVRKFNQMKAANWNDDFVKKSVFMIYIGANDYLNFTKNNPNADASTQQAFVTSVTNKLKNDISLLYSSGASKFVIQTLAPLGCLPIVRQEFNTGMDQCYEKLNDLAKQHNEKIGPMLNELARTAPASAPFQFTVFDFYNAILTRTQRNQNFRFFVTNASCCGVGTHDAYGCGFPNVHSRLCEYQRSYLFFDGRHNTEKAQEMFGHLLFGADTNVIQPMNIRELVVYPADEPMRESWVPPTSATVQLRESRGYEYY</sequence>
<gene>
    <name type="primary">GLL23</name>
    <name type="ordered locus">At1g54010</name>
    <name type="ORF">F15I1.9</name>
</gene>
<feature type="signal peptide" evidence="2">
    <location>
        <begin position="1"/>
        <end position="29"/>
    </location>
</feature>
<feature type="chain" id="PRO_0000367361" description="Inactive GDSL esterase/lipase-like protein 23">
    <location>
        <begin position="30"/>
        <end position="386"/>
    </location>
</feature>
<feature type="active site" description="Nucleophile" evidence="1">
    <location>
        <position position="43"/>
    </location>
</feature>
<feature type="active site" evidence="1">
    <location>
        <position position="322"/>
    </location>
</feature>
<feature type="active site" evidence="1">
    <location>
        <position position="325"/>
    </location>
</feature>
<feature type="glycosylation site" description="N-linked (GlcNAc...) asparagine" evidence="2">
    <location>
        <position position="105"/>
    </location>
</feature>
<feature type="glycosylation site" description="N-linked (GlcNAc...) asparagine" evidence="2">
    <location>
        <position position="165"/>
    </location>
</feature>
<feature type="glycosylation site" description="N-linked (GlcNAc...) asparagine" evidence="2">
    <location>
        <position position="288"/>
    </location>
</feature>
<feature type="sequence conflict" description="In Ref. 4; AAM67268." evidence="6" ref="4">
    <original>T</original>
    <variation>A</variation>
    <location>
        <position position="177"/>
    </location>
</feature>
<proteinExistence type="evidence at protein level"/>
<organism>
    <name type="scientific">Arabidopsis thaliana</name>
    <name type="common">Mouse-ear cress</name>
    <dbReference type="NCBI Taxonomy" id="3702"/>
    <lineage>
        <taxon>Eukaryota</taxon>
        <taxon>Viridiplantae</taxon>
        <taxon>Streptophyta</taxon>
        <taxon>Embryophyta</taxon>
        <taxon>Tracheophyta</taxon>
        <taxon>Spermatophyta</taxon>
        <taxon>Magnoliopsida</taxon>
        <taxon>eudicotyledons</taxon>
        <taxon>Gunneridae</taxon>
        <taxon>Pentapetalae</taxon>
        <taxon>rosids</taxon>
        <taxon>malvids</taxon>
        <taxon>Brassicales</taxon>
        <taxon>Brassicaceae</taxon>
        <taxon>Camelineae</taxon>
        <taxon>Arabidopsis</taxon>
    </lineage>
</organism>